<sequence>MAVAGGRGCVRSLREGVLWRSSPCHCDYTATRHFLGALQKLPLQAWVRKVHTAPLRTLFLLRPVPILLAAGGGYAGYRQYEKYRERQLEKLGLEIPPKLASHWEVSLYKSVPTRLLSRACGRLNQVELPSWLRRPVYSLYIWTFGVNMTEAAVEDLQHYRNLSEFFRRKLKPQARPVCGLHSVISPSDGKILTFGQVKNSEVEQVKGVTYSLESFLGPRACTEDLPFPPASSCDSFRNQLVTREGNELYHCVIYLAPGDYHCFHSPTDWTVSHRRHFPGSLMSVNPGMARWIKELFCHNERVVLTGDWKHGFFSLTAVGATNVGSIRIHFDQDLHTNSPSYSKGSYNDLSFVTHANKEGIPMRKGEPLGEFNLGSTIVLIFEAPKDFNFRLKAGQKILFGEALGSL</sequence>
<gene>
    <name evidence="3" type="primary">Pisd</name>
</gene>
<proteinExistence type="evidence at protein level"/>
<keyword id="KW-0963">Cytoplasm</keyword>
<keyword id="KW-0210">Decarboxylase</keyword>
<keyword id="KW-0444">Lipid biosynthesis</keyword>
<keyword id="KW-0551">Lipid droplet</keyword>
<keyword id="KW-0443">Lipid metabolism</keyword>
<keyword id="KW-0456">Lyase</keyword>
<keyword id="KW-0472">Membrane</keyword>
<keyword id="KW-0496">Mitochondrion</keyword>
<keyword id="KW-0999">Mitochondrion inner membrane</keyword>
<keyword id="KW-0594">Phospholipid biosynthesis</keyword>
<keyword id="KW-1208">Phospholipid metabolism</keyword>
<keyword id="KW-0670">Pyruvate</keyword>
<keyword id="KW-1185">Reference proteome</keyword>
<keyword id="KW-0809">Transit peptide</keyword>
<keyword id="KW-0812">Transmembrane</keyword>
<keyword id="KW-1133">Transmembrane helix</keyword>
<keyword id="KW-0865">Zymogen</keyword>
<organism>
    <name type="scientific">Rattus norvegicus</name>
    <name type="common">Rat</name>
    <dbReference type="NCBI Taxonomy" id="10116"/>
    <lineage>
        <taxon>Eukaryota</taxon>
        <taxon>Metazoa</taxon>
        <taxon>Chordata</taxon>
        <taxon>Craniata</taxon>
        <taxon>Vertebrata</taxon>
        <taxon>Euteleostomi</taxon>
        <taxon>Mammalia</taxon>
        <taxon>Eutheria</taxon>
        <taxon>Euarchontoglires</taxon>
        <taxon>Glires</taxon>
        <taxon>Rodentia</taxon>
        <taxon>Myomorpha</taxon>
        <taxon>Muroidea</taxon>
        <taxon>Muridae</taxon>
        <taxon>Murinae</taxon>
        <taxon>Rattus</taxon>
    </lineage>
</organism>
<evidence type="ECO:0000250" key="1">
    <source>
        <dbReference type="UniProtKB" id="A0A8H4BVL9"/>
    </source>
</evidence>
<evidence type="ECO:0000250" key="2">
    <source>
        <dbReference type="UniProtKB" id="Q9UG56"/>
    </source>
</evidence>
<evidence type="ECO:0000255" key="3">
    <source>
        <dbReference type="HAMAP-Rule" id="MF_03208"/>
    </source>
</evidence>
<evidence type="ECO:0000269" key="4">
    <source>
    </source>
</evidence>
<evidence type="ECO:0000269" key="5">
    <source>
    </source>
</evidence>
<evidence type="ECO:0000303" key="6">
    <source>
    </source>
</evidence>
<evidence type="ECO:0000305" key="7">
    <source>
    </source>
</evidence>
<evidence type="ECO:0000305" key="8">
    <source>
    </source>
</evidence>
<comment type="function">
    <text evidence="1 3 4">Catalyzes the formation of phosphatidylethanolamine (PtdEtn) from phosphatidylserine (PtdSer). Plays a central role in phospholipid metabolism and in the interorganelle trafficking of phosphatidylserine. May be involved in lipid droplet biogenesis at the endoplasmic reticulum membrane (By similarity).</text>
</comment>
<comment type="catalytic activity">
    <reaction evidence="3 4">
        <text>a 1,2-diacyl-sn-glycero-3-phospho-L-serine + H(+) = a 1,2-diacyl-sn-glycero-3-phosphoethanolamine + CO2</text>
        <dbReference type="Rhea" id="RHEA:20828"/>
        <dbReference type="ChEBI" id="CHEBI:15378"/>
        <dbReference type="ChEBI" id="CHEBI:16526"/>
        <dbReference type="ChEBI" id="CHEBI:57262"/>
        <dbReference type="ChEBI" id="CHEBI:64612"/>
        <dbReference type="EC" id="4.1.1.65"/>
    </reaction>
</comment>
<comment type="cofactor">
    <cofactor evidence="3">
        <name>pyruvate</name>
        <dbReference type="ChEBI" id="CHEBI:15361"/>
    </cofactor>
    <text evidence="3">Binds 1 pyruvoyl group covalently per subunit.</text>
</comment>
<comment type="activity regulation">
    <text evidence="4">Inhibited by hydroxylamine.</text>
</comment>
<comment type="biophysicochemical properties">
    <kinetics>
        <KM evidence="4">67 uM for phosphatidylserine</KM>
        <Vmax evidence="4">77.0 nmol/h/mg enzyme</Vmax>
    </kinetics>
    <phDependence>
        <text evidence="4">Optimum pH is 5.</text>
    </phDependence>
</comment>
<comment type="pathway">
    <text evidence="7">Phospholipid metabolism; phosphatidylethanolamine biosynthesis.</text>
</comment>
<comment type="subunit">
    <text evidence="3">Heterodimer of a large membrane-associated beta subunit and a small pyruvoyl-containing alpha subunit.</text>
</comment>
<comment type="subcellular location">
    <molecule>Phosphatidylserine decarboxylase beta chain</molecule>
    <subcellularLocation>
        <location evidence="3 5">Mitochondrion inner membrane</location>
        <topology evidence="3">Single-pass membrane protein</topology>
        <orientation evidence="3 5">Intermembrane side</orientation>
    </subcellularLocation>
</comment>
<comment type="subcellular location">
    <molecule>Phosphatidylserine decarboxylase alpha chain</molecule>
    <subcellularLocation>
        <location evidence="3 5">Mitochondrion inner membrane</location>
        <topology evidence="3 5">Peripheral membrane protein</topology>
        <orientation evidence="3 5">Intermembrane side</orientation>
    </subcellularLocation>
    <subcellularLocation>
        <location evidence="2">Cytoplasm</location>
    </subcellularLocation>
    <text evidence="3 8">Anchored to the mitochondrial inner membrane through its interaction with the integral membrane beta chain.</text>
</comment>
<comment type="subcellular location">
    <subcellularLocation>
        <location evidence="2">Mitochondrion inner membrane</location>
    </subcellularLocation>
    <subcellularLocation>
        <location evidence="2">Lipid droplet</location>
    </subcellularLocation>
    <text evidence="2">Predominantly localizes to lipid droplets in lipid-replete conditions, and to mitochondria in lipid-deplete conditions.</text>
</comment>
<comment type="PTM">
    <text evidence="3">Is synthesized initially as an inactive proenzyme. Formation of the active enzyme involves a self-maturation process in which the active site pyruvoyl group is generated from an internal serine residue via an autocatalytic post-translational modification. Two non-identical subunits are generated from the proenzyme in this reaction, and the pyruvate is formed at the N-terminus of the alpha chain, which is derived from the carboxyl end of the proenzyme. The autoendoproteolytic cleavage occurs by a canonical serine protease mechanism, in which the side chain hydroxyl group of the serine supplies its oxygen atom to form the C-terminus of the beta chain, while the remainder of the serine residue undergoes an oxidative deamination to produce ammonia and the pyruvoyl prosthetic group on the alpha chain. During this reaction, the Ser that is part of the protease active site of the proenzyme becomes the pyruvoyl prosthetic group, which constitutes an essential element of the active site of the mature decarboxylase.</text>
</comment>
<comment type="similarity">
    <text evidence="3">Belongs to the phosphatidylserine decarboxylase family. PSD-B subfamily. Eukaryotic type I sub-subfamily.</text>
</comment>
<dbReference type="EC" id="4.1.1.65" evidence="3 4"/>
<dbReference type="EMBL" id="AC105515">
    <property type="status" value="NOT_ANNOTATED_CDS"/>
    <property type="molecule type" value="Genomic_DNA"/>
</dbReference>
<dbReference type="SMR" id="D3ZAW2"/>
<dbReference type="FunCoup" id="D3ZAW2">
    <property type="interactions" value="2398"/>
</dbReference>
<dbReference type="STRING" id="10116.ENSRNOP00000024812"/>
<dbReference type="iPTMnet" id="D3ZAW2"/>
<dbReference type="PhosphoSitePlus" id="D3ZAW2"/>
<dbReference type="PaxDb" id="10116-ENSRNOP00000024812"/>
<dbReference type="PeptideAtlas" id="D3ZAW2"/>
<dbReference type="AGR" id="RGD:1596729"/>
<dbReference type="RGD" id="1596729">
    <property type="gene designation" value="Pisd"/>
</dbReference>
<dbReference type="VEuPathDB" id="HostDB:ENSRNOG00000018319"/>
<dbReference type="eggNOG" id="KOG2420">
    <property type="taxonomic scope" value="Eukaryota"/>
</dbReference>
<dbReference type="HOGENOM" id="CLU_029061_3_0_1"/>
<dbReference type="InParanoid" id="D3ZAW2"/>
<dbReference type="TreeFam" id="TF313148"/>
<dbReference type="UniPathway" id="UPA00558"/>
<dbReference type="PRO" id="PR:D3ZAW2"/>
<dbReference type="Proteomes" id="UP000002494">
    <property type="component" value="Chromosome 14"/>
</dbReference>
<dbReference type="Bgee" id="ENSRNOG00000018319">
    <property type="expression patterns" value="Expressed in jejunum and 19 other cell types or tissues"/>
</dbReference>
<dbReference type="ExpressionAtlas" id="D3ZAW2">
    <property type="expression patterns" value="baseline and differential"/>
</dbReference>
<dbReference type="GO" id="GO:0005811">
    <property type="term" value="C:lipid droplet"/>
    <property type="evidence" value="ECO:0000250"/>
    <property type="project" value="UniProtKB"/>
</dbReference>
<dbReference type="GO" id="GO:0005743">
    <property type="term" value="C:mitochondrial inner membrane"/>
    <property type="evidence" value="ECO:0000304"/>
    <property type="project" value="Reactome"/>
</dbReference>
<dbReference type="GO" id="GO:0005739">
    <property type="term" value="C:mitochondrion"/>
    <property type="evidence" value="ECO:0000250"/>
    <property type="project" value="UniProtKB"/>
</dbReference>
<dbReference type="GO" id="GO:0004609">
    <property type="term" value="F:phosphatidylserine decarboxylase activity"/>
    <property type="evidence" value="ECO:0000250"/>
    <property type="project" value="UniProtKB"/>
</dbReference>
<dbReference type="GO" id="GO:0140042">
    <property type="term" value="P:lipid droplet formation"/>
    <property type="evidence" value="ECO:0000250"/>
    <property type="project" value="UniProtKB"/>
</dbReference>
<dbReference type="GO" id="GO:0035694">
    <property type="term" value="P:mitochondrial protein catabolic process"/>
    <property type="evidence" value="ECO:0000250"/>
    <property type="project" value="UniProtKB"/>
</dbReference>
<dbReference type="GO" id="GO:0006646">
    <property type="term" value="P:phosphatidylethanolamine biosynthetic process"/>
    <property type="evidence" value="ECO:0000250"/>
    <property type="project" value="UniProtKB"/>
</dbReference>
<dbReference type="GO" id="GO:0016540">
    <property type="term" value="P:protein autoprocessing"/>
    <property type="evidence" value="ECO:0007669"/>
    <property type="project" value="UniProtKB-UniRule"/>
</dbReference>
<dbReference type="GO" id="GO:0010821">
    <property type="term" value="P:regulation of mitochondrion organization"/>
    <property type="evidence" value="ECO:0000250"/>
    <property type="project" value="UniProtKB"/>
</dbReference>
<dbReference type="HAMAP" id="MF_03208">
    <property type="entry name" value="PS_decarb_PSD_B_type1_euk"/>
    <property type="match status" value="1"/>
</dbReference>
<dbReference type="InterPro" id="IPR003817">
    <property type="entry name" value="PS_Dcarbxylase"/>
</dbReference>
<dbReference type="InterPro" id="IPR033177">
    <property type="entry name" value="PSD-B"/>
</dbReference>
<dbReference type="InterPro" id="IPR033661">
    <property type="entry name" value="PSD_type1_euk"/>
</dbReference>
<dbReference type="NCBIfam" id="TIGR00163">
    <property type="entry name" value="PS_decarb"/>
    <property type="match status" value="1"/>
</dbReference>
<dbReference type="PANTHER" id="PTHR10067">
    <property type="entry name" value="PHOSPHATIDYLSERINE DECARBOXYLASE"/>
    <property type="match status" value="1"/>
</dbReference>
<dbReference type="PANTHER" id="PTHR10067:SF6">
    <property type="entry name" value="PHOSPHATIDYLSERINE DECARBOXYLASE PROENZYME, MITOCHONDRIAL"/>
    <property type="match status" value="1"/>
</dbReference>
<dbReference type="Pfam" id="PF02666">
    <property type="entry name" value="PS_Dcarbxylase"/>
    <property type="match status" value="1"/>
</dbReference>
<feature type="transit peptide" description="Mitochondrion" evidence="3">
    <location>
        <begin position="1"/>
        <end position="49"/>
    </location>
</feature>
<feature type="chain" id="PRO_0000435574" description="Phosphatidylserine decarboxylase proenzyme, mitochondrial">
    <location>
        <begin position="50"/>
        <end position="406"/>
    </location>
</feature>
<feature type="chain" id="PRO_0000435575" description="Phosphatidylserine decarboxylase beta chain" evidence="3">
    <location>
        <begin position="50"/>
        <end position="374"/>
    </location>
</feature>
<feature type="chain" id="PRO_0000435576" description="Phosphatidylserine decarboxylase alpha chain" evidence="3">
    <location>
        <begin position="375"/>
        <end position="406"/>
    </location>
</feature>
<feature type="topological domain" description="Mitochondrial matrix" evidence="3 8">
    <location>
        <begin position="50"/>
        <end position="60"/>
    </location>
</feature>
<feature type="transmembrane region" description="Helical" evidence="3">
    <location>
        <begin position="61"/>
        <end position="79"/>
    </location>
</feature>
<feature type="topological domain" description="Mitochondrial intermembrane" evidence="3 8">
    <location>
        <begin position="80"/>
        <end position="406"/>
    </location>
</feature>
<feature type="active site" description="Charge relay system; for autoendoproteolytic cleavage activity" evidence="3">
    <location>
        <position position="188"/>
    </location>
</feature>
<feature type="active site" description="Charge relay system; for autoendoproteolytic cleavage activity" evidence="3">
    <location>
        <position position="264"/>
    </location>
</feature>
<feature type="active site" description="Charge relay system; for autoendoproteolytic cleavage activity" evidence="3">
    <location>
        <position position="375"/>
    </location>
</feature>
<feature type="active site" description="Schiff-base intermediate with substrate; via pyruvic acid; for decarboxylase activity" evidence="3">
    <location>
        <position position="375"/>
    </location>
</feature>
<feature type="site" description="Cleavage (non-hydrolytic); by autocatalysis" evidence="3">
    <location>
        <begin position="374"/>
        <end position="375"/>
    </location>
</feature>
<feature type="modified residue" description="Pyruvic acid (Ser); by autocatalysis" evidence="3">
    <location>
        <position position="375"/>
    </location>
</feature>
<protein>
    <recommendedName>
        <fullName evidence="3 6">Phosphatidylserine decarboxylase proenzyme, mitochondrial</fullName>
        <ecNumber evidence="3 4">4.1.1.65</ecNumber>
    </recommendedName>
    <component>
        <recommendedName>
            <fullName evidence="3">Phosphatidylserine decarboxylase beta chain</fullName>
        </recommendedName>
    </component>
    <component>
        <recommendedName>
            <fullName evidence="3">Phosphatidylserine decarboxylase alpha chain</fullName>
        </recommendedName>
    </component>
</protein>
<reference key="1">
    <citation type="journal article" date="2004" name="Nature">
        <title>Genome sequence of the Brown Norway rat yields insights into mammalian evolution.</title>
        <authorList>
            <person name="Gibbs R.A."/>
            <person name="Weinstock G.M."/>
            <person name="Metzker M.L."/>
            <person name="Muzny D.M."/>
            <person name="Sodergren E.J."/>
            <person name="Scherer S."/>
            <person name="Scott G."/>
            <person name="Steffen D."/>
            <person name="Worley K.C."/>
            <person name="Burch P.E."/>
            <person name="Okwuonu G."/>
            <person name="Hines S."/>
            <person name="Lewis L."/>
            <person name="Deramo C."/>
            <person name="Delgado O."/>
            <person name="Dugan-Rocha S."/>
            <person name="Miner G."/>
            <person name="Morgan M."/>
            <person name="Hawes A."/>
            <person name="Gill R."/>
            <person name="Holt R.A."/>
            <person name="Adams M.D."/>
            <person name="Amanatides P.G."/>
            <person name="Baden-Tillson H."/>
            <person name="Barnstead M."/>
            <person name="Chin S."/>
            <person name="Evans C.A."/>
            <person name="Ferriera S."/>
            <person name="Fosler C."/>
            <person name="Glodek A."/>
            <person name="Gu Z."/>
            <person name="Jennings D."/>
            <person name="Kraft C.L."/>
            <person name="Nguyen T."/>
            <person name="Pfannkoch C.M."/>
            <person name="Sitter C."/>
            <person name="Sutton G.G."/>
            <person name="Venter J.C."/>
            <person name="Woodage T."/>
            <person name="Smith D."/>
            <person name="Lee H.-M."/>
            <person name="Gustafson E."/>
            <person name="Cahill P."/>
            <person name="Kana A."/>
            <person name="Doucette-Stamm L."/>
            <person name="Weinstock K."/>
            <person name="Fechtel K."/>
            <person name="Weiss R.B."/>
            <person name="Dunn D.M."/>
            <person name="Green E.D."/>
            <person name="Blakesley R.W."/>
            <person name="Bouffard G.G."/>
            <person name="De Jong P.J."/>
            <person name="Osoegawa K."/>
            <person name="Zhu B."/>
            <person name="Marra M."/>
            <person name="Schein J."/>
            <person name="Bosdet I."/>
            <person name="Fjell C."/>
            <person name="Jones S."/>
            <person name="Krzywinski M."/>
            <person name="Mathewson C."/>
            <person name="Siddiqui A."/>
            <person name="Wye N."/>
            <person name="McPherson J."/>
            <person name="Zhao S."/>
            <person name="Fraser C.M."/>
            <person name="Shetty J."/>
            <person name="Shatsman S."/>
            <person name="Geer K."/>
            <person name="Chen Y."/>
            <person name="Abramzon S."/>
            <person name="Nierman W.C."/>
            <person name="Havlak P.H."/>
            <person name="Chen R."/>
            <person name="Durbin K.J."/>
            <person name="Egan A."/>
            <person name="Ren Y."/>
            <person name="Song X.-Z."/>
            <person name="Li B."/>
            <person name="Liu Y."/>
            <person name="Qin X."/>
            <person name="Cawley S."/>
            <person name="Cooney A.J."/>
            <person name="D'Souza L.M."/>
            <person name="Martin K."/>
            <person name="Wu J.Q."/>
            <person name="Gonzalez-Garay M.L."/>
            <person name="Jackson A.R."/>
            <person name="Kalafus K.J."/>
            <person name="McLeod M.P."/>
            <person name="Milosavljevic A."/>
            <person name="Virk D."/>
            <person name="Volkov A."/>
            <person name="Wheeler D.A."/>
            <person name="Zhang Z."/>
            <person name="Bailey J.A."/>
            <person name="Eichler E.E."/>
            <person name="Tuzun E."/>
            <person name="Birney E."/>
            <person name="Mongin E."/>
            <person name="Ureta-Vidal A."/>
            <person name="Woodwark C."/>
            <person name="Zdobnov E."/>
            <person name="Bork P."/>
            <person name="Suyama M."/>
            <person name="Torrents D."/>
            <person name="Alexandersson M."/>
            <person name="Trask B.J."/>
            <person name="Young J.M."/>
            <person name="Huang H."/>
            <person name="Wang H."/>
            <person name="Xing H."/>
            <person name="Daniels S."/>
            <person name="Gietzen D."/>
            <person name="Schmidt J."/>
            <person name="Stevens K."/>
            <person name="Vitt U."/>
            <person name="Wingrove J."/>
            <person name="Camara F."/>
            <person name="Mar Alba M."/>
            <person name="Abril J.F."/>
            <person name="Guigo R."/>
            <person name="Smit A."/>
            <person name="Dubchak I."/>
            <person name="Rubin E.M."/>
            <person name="Couronne O."/>
            <person name="Poliakov A."/>
            <person name="Huebner N."/>
            <person name="Ganten D."/>
            <person name="Goesele C."/>
            <person name="Hummel O."/>
            <person name="Kreitler T."/>
            <person name="Lee Y.-A."/>
            <person name="Monti J."/>
            <person name="Schulz H."/>
            <person name="Zimdahl H."/>
            <person name="Himmelbauer H."/>
            <person name="Lehrach H."/>
            <person name="Jacob H.J."/>
            <person name="Bromberg S."/>
            <person name="Gullings-Handley J."/>
            <person name="Jensen-Seaman M.I."/>
            <person name="Kwitek A.E."/>
            <person name="Lazar J."/>
            <person name="Pasko D."/>
            <person name="Tonellato P.J."/>
            <person name="Twigger S."/>
            <person name="Ponting C.P."/>
            <person name="Duarte J.M."/>
            <person name="Rice S."/>
            <person name="Goodstadt L."/>
            <person name="Beatson S.A."/>
            <person name="Emes R.D."/>
            <person name="Winter E.E."/>
            <person name="Webber C."/>
            <person name="Brandt P."/>
            <person name="Nyakatura G."/>
            <person name="Adetobi M."/>
            <person name="Chiaromonte F."/>
            <person name="Elnitski L."/>
            <person name="Eswara P."/>
            <person name="Hardison R.C."/>
            <person name="Hou M."/>
            <person name="Kolbe D."/>
            <person name="Makova K."/>
            <person name="Miller W."/>
            <person name="Nekrutenko A."/>
            <person name="Riemer C."/>
            <person name="Schwartz S."/>
            <person name="Taylor J."/>
            <person name="Yang S."/>
            <person name="Zhang Y."/>
            <person name="Lindpaintner K."/>
            <person name="Andrews T.D."/>
            <person name="Caccamo M."/>
            <person name="Clamp M."/>
            <person name="Clarke L."/>
            <person name="Curwen V."/>
            <person name="Durbin R.M."/>
            <person name="Eyras E."/>
            <person name="Searle S.M."/>
            <person name="Cooper G.M."/>
            <person name="Batzoglou S."/>
            <person name="Brudno M."/>
            <person name="Sidow A."/>
            <person name="Stone E.A."/>
            <person name="Payseur B.A."/>
            <person name="Bourque G."/>
            <person name="Lopez-Otin C."/>
            <person name="Puente X.S."/>
            <person name="Chakrabarti K."/>
            <person name="Chatterji S."/>
            <person name="Dewey C."/>
            <person name="Pachter L."/>
            <person name="Bray N."/>
            <person name="Yap V.B."/>
            <person name="Caspi A."/>
            <person name="Tesler G."/>
            <person name="Pevzner P.A."/>
            <person name="Haussler D."/>
            <person name="Roskin K.M."/>
            <person name="Baertsch R."/>
            <person name="Clawson H."/>
            <person name="Furey T.S."/>
            <person name="Hinrichs A.S."/>
            <person name="Karolchik D."/>
            <person name="Kent W.J."/>
            <person name="Rosenbloom K.R."/>
            <person name="Trumbower H."/>
            <person name="Weirauch M."/>
            <person name="Cooper D.N."/>
            <person name="Stenson P.D."/>
            <person name="Ma B."/>
            <person name="Brent M."/>
            <person name="Arumugam M."/>
            <person name="Shteynberg D."/>
            <person name="Copley R.R."/>
            <person name="Taylor M.S."/>
            <person name="Riethman H."/>
            <person name="Mudunuri U."/>
            <person name="Peterson J."/>
            <person name="Guyer M."/>
            <person name="Felsenfeld A."/>
            <person name="Old S."/>
            <person name="Mockrin S."/>
            <person name="Collins F.S."/>
        </authorList>
    </citation>
    <scope>NUCLEOTIDE SEQUENCE [LARGE SCALE GENOMIC DNA]</scope>
    <source>
        <strain>Brown Norway</strain>
    </source>
</reference>
<reference key="2">
    <citation type="journal article" date="1983" name="FEBS Lett.">
        <title>Phosphatidylserine decarboxylase is located on the external side of the inner mitochondrial membrane.</title>
        <authorList>
            <person name="Zborowski J."/>
            <person name="Dygas A."/>
            <person name="Wojtczak L."/>
        </authorList>
    </citation>
    <scope>SUBCELLULAR LOCATION</scope>
    <scope>TOPOLOGY</scope>
</reference>
<reference key="3">
    <citation type="journal article" date="1989" name="Acta Biochim. Pol.">
        <title>Effect of triton X-100 on the activity and solubilization of rat liver mitochondrial phosphatidylserine decarboxylase.</title>
        <authorList>
            <person name="Dygas A."/>
            <person name="Zborowski J."/>
        </authorList>
    </citation>
    <scope>FUNCTION</scope>
    <scope>BIOPHYSICOCHEMICAL PROPERTIES</scope>
    <scope>ACTIVITY REGULATION</scope>
    <scope>CATALYTIC ACTIVITY</scope>
    <scope>PATHWAY</scope>
</reference>
<name>PISD_RAT</name>
<accession>D3ZAW2</accession>